<proteinExistence type="inferred from homology"/>
<reference key="1">
    <citation type="submission" date="2005-08" db="EMBL/GenBank/DDBJ databases">
        <authorList>
            <consortium name="NIH - Mammalian Gene Collection (MGC) project"/>
        </authorList>
    </citation>
    <scope>NUCLEOTIDE SEQUENCE [LARGE SCALE MRNA]</scope>
    <source>
        <strain>Hereford</strain>
        <tissue>Thymus</tissue>
    </source>
</reference>
<organism>
    <name type="scientific">Bos taurus</name>
    <name type="common">Bovine</name>
    <dbReference type="NCBI Taxonomy" id="9913"/>
    <lineage>
        <taxon>Eukaryota</taxon>
        <taxon>Metazoa</taxon>
        <taxon>Chordata</taxon>
        <taxon>Craniata</taxon>
        <taxon>Vertebrata</taxon>
        <taxon>Euteleostomi</taxon>
        <taxon>Mammalia</taxon>
        <taxon>Eutheria</taxon>
        <taxon>Laurasiatheria</taxon>
        <taxon>Artiodactyla</taxon>
        <taxon>Ruminantia</taxon>
        <taxon>Pecora</taxon>
        <taxon>Bovidae</taxon>
        <taxon>Bovinae</taxon>
        <taxon>Bos</taxon>
    </lineage>
</organism>
<sequence>MSKAHPPELKKFMDKKLSLKLNGGRHVQGILRGFDPFMNLVIDECVEMATSGQQNNIGMVVIRGNSIIMLEALERV</sequence>
<feature type="chain" id="PRO_0000244619" description="Small nuclear ribonucleoprotein G">
    <location>
        <begin position="1"/>
        <end position="76"/>
    </location>
</feature>
<feature type="domain" description="Sm" evidence="2">
    <location>
        <begin position="4"/>
        <end position="76"/>
    </location>
</feature>
<gene>
    <name type="primary">SNRPG</name>
</gene>
<dbReference type="EMBL" id="BC103236">
    <property type="protein sequence ID" value="AAI03237.1"/>
    <property type="molecule type" value="mRNA"/>
</dbReference>
<dbReference type="RefSeq" id="NP_001035633.1">
    <property type="nucleotide sequence ID" value="NM_001040543.3"/>
</dbReference>
<dbReference type="RefSeq" id="XP_015323426.1">
    <property type="nucleotide sequence ID" value="XM_015467940.1"/>
</dbReference>
<dbReference type="SMR" id="Q3ZBL0"/>
<dbReference type="FunCoup" id="Q3ZBL0">
    <property type="interactions" value="2932"/>
</dbReference>
<dbReference type="STRING" id="9913.ENSBTAP00000007241"/>
<dbReference type="PaxDb" id="9913-ENSBTAP00000007241"/>
<dbReference type="Ensembl" id="ENSBTAT00000007241.3">
    <property type="protein sequence ID" value="ENSBTAP00000007241.2"/>
    <property type="gene ID" value="ENSBTAG00000034506.3"/>
</dbReference>
<dbReference type="Ensembl" id="ENSBTAT00000080257.2">
    <property type="protein sequence ID" value="ENSBTAP00000065269.2"/>
    <property type="gene ID" value="ENSBTAG00000053210.2"/>
</dbReference>
<dbReference type="GeneID" id="522621"/>
<dbReference type="KEGG" id="bta:107131494"/>
<dbReference type="KEGG" id="bta:522621"/>
<dbReference type="CTD" id="6637"/>
<dbReference type="VEuPathDB" id="HostDB:ENSBTAG00000034506"/>
<dbReference type="eggNOG" id="KOG1780">
    <property type="taxonomic scope" value="Eukaryota"/>
</dbReference>
<dbReference type="GeneTree" id="ENSGT00510000046985"/>
<dbReference type="HOGENOM" id="CLU_076902_10_1_1"/>
<dbReference type="InParanoid" id="Q3ZBL0"/>
<dbReference type="OMA" id="MSKAQPP"/>
<dbReference type="OrthoDB" id="2146at2759"/>
<dbReference type="TreeFam" id="TF315099"/>
<dbReference type="Reactome" id="R-BTA-111367">
    <property type="pathway name" value="SLBP independent Processing of Histone Pre-mRNAs"/>
</dbReference>
<dbReference type="Reactome" id="R-BTA-191859">
    <property type="pathway name" value="snRNP Assembly"/>
</dbReference>
<dbReference type="Reactome" id="R-BTA-72163">
    <property type="pathway name" value="mRNA Splicing - Major Pathway"/>
</dbReference>
<dbReference type="Reactome" id="R-BTA-72165">
    <property type="pathway name" value="mRNA Splicing - Minor Pathway"/>
</dbReference>
<dbReference type="Reactome" id="R-BTA-73856">
    <property type="pathway name" value="RNA Polymerase II Transcription Termination"/>
</dbReference>
<dbReference type="Reactome" id="R-BTA-77588">
    <property type="pathway name" value="SLBP Dependent Processing of Replication-Dependent Histone Pre-mRNAs"/>
</dbReference>
<dbReference type="Proteomes" id="UP000009136">
    <property type="component" value="Chromosome 11"/>
</dbReference>
<dbReference type="Proteomes" id="UP000009136">
    <property type="component" value="Chromosome 19"/>
</dbReference>
<dbReference type="Bgee" id="ENSBTAG00000034506">
    <property type="expression patterns" value="Expressed in ascending colon and 92 other cell types or tissues"/>
</dbReference>
<dbReference type="GO" id="GO:0071013">
    <property type="term" value="C:catalytic step 2 spliceosome"/>
    <property type="evidence" value="ECO:0000318"/>
    <property type="project" value="GO_Central"/>
</dbReference>
<dbReference type="GO" id="GO:0005829">
    <property type="term" value="C:cytosol"/>
    <property type="evidence" value="ECO:0000250"/>
    <property type="project" value="UniProtKB"/>
</dbReference>
<dbReference type="GO" id="GO:0034709">
    <property type="term" value="C:methylosome"/>
    <property type="evidence" value="ECO:0000250"/>
    <property type="project" value="UniProtKB"/>
</dbReference>
<dbReference type="GO" id="GO:0005634">
    <property type="term" value="C:nucleus"/>
    <property type="evidence" value="ECO:0000250"/>
    <property type="project" value="UniProtKB"/>
</dbReference>
<dbReference type="GO" id="GO:0043186">
    <property type="term" value="C:P granule"/>
    <property type="evidence" value="ECO:0000318"/>
    <property type="project" value="GO_Central"/>
</dbReference>
<dbReference type="GO" id="GO:0071011">
    <property type="term" value="C:precatalytic spliceosome"/>
    <property type="evidence" value="ECO:0000318"/>
    <property type="project" value="GO_Central"/>
</dbReference>
<dbReference type="GO" id="GO:0034719">
    <property type="term" value="C:SMN-Sm protein complex"/>
    <property type="evidence" value="ECO:0000250"/>
    <property type="project" value="UniProtKB"/>
</dbReference>
<dbReference type="GO" id="GO:0097526">
    <property type="term" value="C:spliceosomal tri-snRNP complex"/>
    <property type="evidence" value="ECO:0000318"/>
    <property type="project" value="GO_Central"/>
</dbReference>
<dbReference type="GO" id="GO:0005685">
    <property type="term" value="C:U1 snRNP"/>
    <property type="evidence" value="ECO:0000250"/>
    <property type="project" value="UniProtKB"/>
</dbReference>
<dbReference type="GO" id="GO:0005689">
    <property type="term" value="C:U12-type spliceosomal complex"/>
    <property type="evidence" value="ECO:0000318"/>
    <property type="project" value="GO_Central"/>
</dbReference>
<dbReference type="GO" id="GO:0005686">
    <property type="term" value="C:U2 snRNP"/>
    <property type="evidence" value="ECO:0000318"/>
    <property type="project" value="GO_Central"/>
</dbReference>
<dbReference type="GO" id="GO:0071007">
    <property type="term" value="C:U2-type catalytic step 2 spliceosome"/>
    <property type="evidence" value="ECO:0000250"/>
    <property type="project" value="UniProtKB"/>
</dbReference>
<dbReference type="GO" id="GO:0071005">
    <property type="term" value="C:U2-type precatalytic spliceosome"/>
    <property type="evidence" value="ECO:0000250"/>
    <property type="project" value="UniProtKB"/>
</dbReference>
<dbReference type="GO" id="GO:0071004">
    <property type="term" value="C:U2-type prespliceosome"/>
    <property type="evidence" value="ECO:0000318"/>
    <property type="project" value="GO_Central"/>
</dbReference>
<dbReference type="GO" id="GO:0005684">
    <property type="term" value="C:U2-type spliceosomal complex"/>
    <property type="evidence" value="ECO:0000250"/>
    <property type="project" value="UniProtKB"/>
</dbReference>
<dbReference type="GO" id="GO:0005687">
    <property type="term" value="C:U4 snRNP"/>
    <property type="evidence" value="ECO:0000250"/>
    <property type="project" value="UniProtKB"/>
</dbReference>
<dbReference type="GO" id="GO:0046540">
    <property type="term" value="C:U4/U6 x U5 tri-snRNP complex"/>
    <property type="evidence" value="ECO:0000250"/>
    <property type="project" value="UniProtKB"/>
</dbReference>
<dbReference type="GO" id="GO:0005682">
    <property type="term" value="C:U5 snRNP"/>
    <property type="evidence" value="ECO:0000318"/>
    <property type="project" value="GO_Central"/>
</dbReference>
<dbReference type="GO" id="GO:0005683">
    <property type="term" value="C:U7 snRNP"/>
    <property type="evidence" value="ECO:0000250"/>
    <property type="project" value="UniProtKB"/>
</dbReference>
<dbReference type="GO" id="GO:0003723">
    <property type="term" value="F:RNA binding"/>
    <property type="evidence" value="ECO:0007669"/>
    <property type="project" value="UniProtKB-KW"/>
</dbReference>
<dbReference type="GO" id="GO:0000398">
    <property type="term" value="P:mRNA splicing, via spliceosome"/>
    <property type="evidence" value="ECO:0000250"/>
    <property type="project" value="UniProtKB"/>
</dbReference>
<dbReference type="GO" id="GO:0000387">
    <property type="term" value="P:spliceosomal snRNP assembly"/>
    <property type="evidence" value="ECO:0000250"/>
    <property type="project" value="UniProtKB"/>
</dbReference>
<dbReference type="CDD" id="cd01719">
    <property type="entry name" value="Sm_G"/>
    <property type="match status" value="1"/>
</dbReference>
<dbReference type="FunFam" id="2.30.30.100:FF:000017">
    <property type="entry name" value="Small nuclear ribonucleoprotein G"/>
    <property type="match status" value="1"/>
</dbReference>
<dbReference type="Gene3D" id="2.30.30.100">
    <property type="match status" value="1"/>
</dbReference>
<dbReference type="InterPro" id="IPR044641">
    <property type="entry name" value="Lsm7/SmG-like"/>
</dbReference>
<dbReference type="InterPro" id="IPR010920">
    <property type="entry name" value="LSM_dom_sf"/>
</dbReference>
<dbReference type="InterPro" id="IPR047575">
    <property type="entry name" value="Sm"/>
</dbReference>
<dbReference type="InterPro" id="IPR001163">
    <property type="entry name" value="Sm_dom_euk/arc"/>
</dbReference>
<dbReference type="InterPro" id="IPR034098">
    <property type="entry name" value="Sm_G"/>
</dbReference>
<dbReference type="PANTHER" id="PTHR10553">
    <property type="entry name" value="SMALL NUCLEAR RIBONUCLEOPROTEIN"/>
    <property type="match status" value="1"/>
</dbReference>
<dbReference type="PANTHER" id="PTHR10553:SF26">
    <property type="entry name" value="SMALL NUCLEAR RIBONUCLEOPROTEIN G-RELATED"/>
    <property type="match status" value="1"/>
</dbReference>
<dbReference type="Pfam" id="PF01423">
    <property type="entry name" value="LSM"/>
    <property type="match status" value="1"/>
</dbReference>
<dbReference type="PIRSF" id="PIRSF037188">
    <property type="entry name" value="U6_snRNA_Lsm7"/>
    <property type="match status" value="1"/>
</dbReference>
<dbReference type="SMART" id="SM00651">
    <property type="entry name" value="Sm"/>
    <property type="match status" value="1"/>
</dbReference>
<dbReference type="SUPFAM" id="SSF50182">
    <property type="entry name" value="Sm-like ribonucleoproteins"/>
    <property type="match status" value="1"/>
</dbReference>
<dbReference type="PROSITE" id="PS52002">
    <property type="entry name" value="SM"/>
    <property type="match status" value="1"/>
</dbReference>
<comment type="function">
    <text evidence="1">Plays a role in pre-mRNA splicing as a core component of the spliceosomal U1, U2, U4 and U5 small nuclear ribonucleoproteins (snRNPs), the building blocks of the spliceosome. Component of both the pre-catalytic spliceosome B complex and activated spliceosome C complexes. As a component of the minor spliceosome, involved in the splicing of U12-type introns in pre-mRNAs. As part of the U7 snRNP it is involved in histone 3'-end processing.</text>
</comment>
<comment type="subunit">
    <text evidence="1">Core component of the spliceosomal U1, U2, U4 and U5 small nuclear ribonucleoproteins (snRNPs), the building blocks of the spliceosome. Most spliceosomal snRNPs contain a common set of Sm proteins, SNRPB, SNRPD1, SNRPD2, SNRPD3, SNRPE, SNRPF and SNRPG that assemble in a heptameric protein ring on the Sm site of the small nuclear RNA to form the core snRNP. Component of the U1 snRNP. The U1 snRNP is composed of the U1 snRNA and the 7 core Sm proteins SNRPB, SNRPD1, SNRPD2, SNRPD3, SNRPE, SNRPF and SNRPG, and at least three U1 snRNP-specific proteins SNRNP70/U1-70K, SNRPA/U1-A and SNRPC/U1-C. Component of the U4/U6-U5 tri-snRNP complex composed of the U4, U6 and U5 snRNAs and at least PRPF3, PRPF4, PRPF6, PRPF8, PRPF31, SNRNP200, TXNL4A, SNRNP40, SNRPB, SNRPD1, SNRPD2, SNRPD3, SNRPE, SNRPF, SNRPG, DDX23, CD2BP2, PPIH, SNU13, EFTUD2, SART1 and USP39, plus LSM2, LSM3, LSM4, LSM5, LSM6, LSM7 and LSM8. Component of the U7 snRNP complex, or U7 Sm protein core complex, that is composed of the U7 snRNA and at least LSM10, LSM11, SNRPB, SNRPD3, SNRPE, SNRPF and SNRPG; the complex does not contain SNRPD1 and SNRPD2. Component of the minor spliceosome, which splices U12-type introns. Part of the SMN-Sm complex that contains SMN1, GEMIN2/SIP1, DDX20/GEMIN3, GEMIN4, GEMIN5, GEMIN6, GEMIN7, GEMIN8, STRAP/UNRIP and the Sm proteins SNRPB, SNRPD1, SNRPD2, SNRPD3, SNRPE, SNRPF and SNRPG; catalyzes core snRNPs assembly. Forms a 6S pICln-Sm complex composed of CLNS1A/pICln, SNRPD1, SNRPD2, SNRPE, SNRPF and SNRPG; ring-like structure where CLNS1A/pICln mimics additional Sm proteins and which is unable to assemble into the core snRNP. Interacts with GEMIN2 (via N-terminus); the interaction is direct. Interacts with SNRPE; the interaction is direct.</text>
</comment>
<comment type="subcellular location">
    <subcellularLocation>
        <location evidence="1">Cytoplasm</location>
        <location evidence="1">Cytosol</location>
    </subcellularLocation>
    <subcellularLocation>
        <location evidence="1">Nucleus</location>
    </subcellularLocation>
    <text evidence="1">SMN-mediated assembly into core snRNPs occurs in the cytosol before SMN-mediated transport to the nucleus to be included in spliceosomes.</text>
</comment>
<comment type="similarity">
    <text evidence="3">Belongs to the snRNP Sm proteins family.</text>
</comment>
<protein>
    <recommendedName>
        <fullName>Small nuclear ribonucleoprotein G</fullName>
        <shortName>snRNP-G</shortName>
    </recommendedName>
    <alternativeName>
        <fullName>Sm protein G</fullName>
        <shortName>Sm-G</shortName>
        <shortName>SmG</shortName>
    </alternativeName>
</protein>
<accession>Q3ZBL0</accession>
<name>RUXG_BOVIN</name>
<evidence type="ECO:0000250" key="1">
    <source>
        <dbReference type="UniProtKB" id="P62308"/>
    </source>
</evidence>
<evidence type="ECO:0000255" key="2">
    <source>
        <dbReference type="PROSITE-ProRule" id="PRU01346"/>
    </source>
</evidence>
<evidence type="ECO:0000305" key="3"/>
<keyword id="KW-0963">Cytoplasm</keyword>
<keyword id="KW-0507">mRNA processing</keyword>
<keyword id="KW-0508">mRNA splicing</keyword>
<keyword id="KW-0539">Nucleus</keyword>
<keyword id="KW-1185">Reference proteome</keyword>
<keyword id="KW-0687">Ribonucleoprotein</keyword>
<keyword id="KW-0694">RNA-binding</keyword>
<keyword id="KW-0747">Spliceosome</keyword>